<gene>
    <name evidence="1" type="primary">rlmL</name>
    <name type="ordered locus">SPA1789</name>
</gene>
<keyword id="KW-0963">Cytoplasm</keyword>
<keyword id="KW-0489">Methyltransferase</keyword>
<keyword id="KW-0694">RNA-binding</keyword>
<keyword id="KW-0698">rRNA processing</keyword>
<keyword id="KW-0949">S-adenosyl-L-methionine</keyword>
<keyword id="KW-0808">Transferase</keyword>
<accession>Q5PGE3</accession>
<organism>
    <name type="scientific">Salmonella paratyphi A (strain ATCC 9150 / SARB42)</name>
    <dbReference type="NCBI Taxonomy" id="295319"/>
    <lineage>
        <taxon>Bacteria</taxon>
        <taxon>Pseudomonadati</taxon>
        <taxon>Pseudomonadota</taxon>
        <taxon>Gammaproteobacteria</taxon>
        <taxon>Enterobacterales</taxon>
        <taxon>Enterobacteriaceae</taxon>
        <taxon>Salmonella</taxon>
    </lineage>
</organism>
<name>RLMKL_SALPA</name>
<evidence type="ECO:0000255" key="1">
    <source>
        <dbReference type="HAMAP-Rule" id="MF_01858"/>
    </source>
</evidence>
<protein>
    <recommendedName>
        <fullName evidence="1">Ribosomal RNA large subunit methyltransferase K/L</fullName>
    </recommendedName>
    <domain>
        <recommendedName>
            <fullName evidence="1">23S rRNA m2G2445 methyltransferase</fullName>
            <ecNumber evidence="1">2.1.1.173</ecNumber>
        </recommendedName>
        <alternativeName>
            <fullName evidence="1">rRNA (guanine-N(2)-)-methyltransferase RlmL</fullName>
        </alternativeName>
    </domain>
    <domain>
        <recommendedName>
            <fullName evidence="1">23S rRNA m7G2069 methyltransferase</fullName>
            <ecNumber evidence="1">2.1.1.264</ecNumber>
        </recommendedName>
        <alternativeName>
            <fullName evidence="1">rRNA (guanine-N(7)-)-methyltransferase RlmK</fullName>
        </alternativeName>
    </domain>
</protein>
<proteinExistence type="inferred from homology"/>
<reference key="1">
    <citation type="journal article" date="2004" name="Nat. Genet.">
        <title>Comparison of genome degradation in Paratyphi A and Typhi, human-restricted serovars of Salmonella enterica that cause typhoid.</title>
        <authorList>
            <person name="McClelland M."/>
            <person name="Sanderson K.E."/>
            <person name="Clifton S.W."/>
            <person name="Latreille P."/>
            <person name="Porwollik S."/>
            <person name="Sabo A."/>
            <person name="Meyer R."/>
            <person name="Bieri T."/>
            <person name="Ozersky P."/>
            <person name="McLellan M."/>
            <person name="Harkins C.R."/>
            <person name="Wang C."/>
            <person name="Nguyen C."/>
            <person name="Berghoff A."/>
            <person name="Elliott G."/>
            <person name="Kohlberg S."/>
            <person name="Strong C."/>
            <person name="Du F."/>
            <person name="Carter J."/>
            <person name="Kremizki C."/>
            <person name="Layman D."/>
            <person name="Leonard S."/>
            <person name="Sun H."/>
            <person name="Fulton L."/>
            <person name="Nash W."/>
            <person name="Miner T."/>
            <person name="Minx P."/>
            <person name="Delehaunty K."/>
            <person name="Fronick C."/>
            <person name="Magrini V."/>
            <person name="Nhan M."/>
            <person name="Warren W."/>
            <person name="Florea L."/>
            <person name="Spieth J."/>
            <person name="Wilson R.K."/>
        </authorList>
    </citation>
    <scope>NUCLEOTIDE SEQUENCE [LARGE SCALE GENOMIC DNA]</scope>
    <source>
        <strain>ATCC 9150 / SARB42</strain>
    </source>
</reference>
<comment type="function">
    <text evidence="1">Specifically methylates the guanine in position 2445 (m2G2445) and the guanine in position 2069 (m7G2069) of 23S rRNA.</text>
</comment>
<comment type="catalytic activity">
    <reaction evidence="1">
        <text>guanosine(2445) in 23S rRNA + S-adenosyl-L-methionine = N(2)-methylguanosine(2445) in 23S rRNA + S-adenosyl-L-homocysteine + H(+)</text>
        <dbReference type="Rhea" id="RHEA:42740"/>
        <dbReference type="Rhea" id="RHEA-COMP:10215"/>
        <dbReference type="Rhea" id="RHEA-COMP:10216"/>
        <dbReference type="ChEBI" id="CHEBI:15378"/>
        <dbReference type="ChEBI" id="CHEBI:57856"/>
        <dbReference type="ChEBI" id="CHEBI:59789"/>
        <dbReference type="ChEBI" id="CHEBI:74269"/>
        <dbReference type="ChEBI" id="CHEBI:74481"/>
        <dbReference type="EC" id="2.1.1.173"/>
    </reaction>
</comment>
<comment type="catalytic activity">
    <reaction evidence="1">
        <text>guanosine(2069) in 23S rRNA + S-adenosyl-L-methionine = N(2)-methylguanosine(2069) in 23S rRNA + S-adenosyl-L-homocysteine + H(+)</text>
        <dbReference type="Rhea" id="RHEA:43772"/>
        <dbReference type="Rhea" id="RHEA-COMP:10688"/>
        <dbReference type="Rhea" id="RHEA-COMP:10689"/>
        <dbReference type="ChEBI" id="CHEBI:15378"/>
        <dbReference type="ChEBI" id="CHEBI:57856"/>
        <dbReference type="ChEBI" id="CHEBI:59789"/>
        <dbReference type="ChEBI" id="CHEBI:74269"/>
        <dbReference type="ChEBI" id="CHEBI:74481"/>
        <dbReference type="EC" id="2.1.1.264"/>
    </reaction>
</comment>
<comment type="subcellular location">
    <subcellularLocation>
        <location evidence="1">Cytoplasm</location>
    </subcellularLocation>
</comment>
<comment type="similarity">
    <text evidence="1">Belongs to the methyltransferase superfamily. RlmKL family.</text>
</comment>
<sequence>MNSLFASTARGLEELLKTELEKLGAVGCQVVQGGVHFQGDTRLIYQSLMWSRLASRIILPMGECKVYSDLDLYLGVQAINWTEIFNPGATFAVHFSGLNDTIRNSQYGAMKVKDAIVDAFTRKNLPRPNVDRESPDLRINVWLNKETASIALDLSGDGLHLRGYRDRTGLAPIKETLAAAIVMRSGWQPGTPLLDPMCGSGTLLIEAAMWATDRAPGLHRGHWGFSGWAQHDETIWQEVKAEAQTRARKGLAEYSSHFYGSDSDARVIERARSNARRAGIGELITFEVKDVAQLSNPLPKGPYGTVISNPPYGERLDSEPALIALHSLLGRTMKNQFGGWNLSLFSASPDLLGSLQLRADKQFKAKNGPLDCVQKNYHIAETTADSKPATVAEDYANRLRKNLKKLEKWARQEGIECYRLYDADLPEYNVAVDRYGDWAVIQEYAPPKTVDAQKARQRLFDIIAATLSVLGIPPNKLVLKTRERQKGKNQYQKMSEKGEFLEVSEYNARLWVNLTDYLDTGLFLDHRIARRMLGEMSKGKDFLNLFSYTGSASVHAGLGGARSTTTVDMSRTYLEWAERNLRLNGLSGRAHRLIQADCLGWLREANEQFDLIFIDPPTFSNSKRMEESFDVQRDHVALMKDLKRLLRKGGTIMFSNNKRGFRMDLEGLAELGLTAQEITQKTLSPDFARNRQIHNCWLIRAA</sequence>
<feature type="chain" id="PRO_0000366812" description="Ribosomal RNA large subunit methyltransferase K/L">
    <location>
        <begin position="1"/>
        <end position="702"/>
    </location>
</feature>
<feature type="domain" description="THUMP" evidence="1">
    <location>
        <begin position="43"/>
        <end position="154"/>
    </location>
</feature>
<dbReference type="EC" id="2.1.1.173" evidence="1"/>
<dbReference type="EC" id="2.1.1.264" evidence="1"/>
<dbReference type="EMBL" id="CP000026">
    <property type="protein sequence ID" value="AAV77705.1"/>
    <property type="molecule type" value="Genomic_DNA"/>
</dbReference>
<dbReference type="SMR" id="Q5PGE3"/>
<dbReference type="KEGG" id="spt:SPA1789"/>
<dbReference type="HOGENOM" id="CLU_014042_2_0_6"/>
<dbReference type="Proteomes" id="UP000008185">
    <property type="component" value="Chromosome"/>
</dbReference>
<dbReference type="GO" id="GO:0005737">
    <property type="term" value="C:cytoplasm"/>
    <property type="evidence" value="ECO:0007669"/>
    <property type="project" value="UniProtKB-SubCell"/>
</dbReference>
<dbReference type="GO" id="GO:0052915">
    <property type="term" value="F:23S rRNA (guanine(2445)-N(2))-methyltransferase activity"/>
    <property type="evidence" value="ECO:0007669"/>
    <property type="project" value="UniProtKB-UniRule"/>
</dbReference>
<dbReference type="GO" id="GO:0003723">
    <property type="term" value="F:RNA binding"/>
    <property type="evidence" value="ECO:0007669"/>
    <property type="project" value="UniProtKB-KW"/>
</dbReference>
<dbReference type="GO" id="GO:0070043">
    <property type="term" value="F:rRNA (guanine-N7-)-methyltransferase activity"/>
    <property type="evidence" value="ECO:0007669"/>
    <property type="project" value="UniProtKB-UniRule"/>
</dbReference>
<dbReference type="CDD" id="cd02440">
    <property type="entry name" value="AdoMet_MTases"/>
    <property type="match status" value="2"/>
</dbReference>
<dbReference type="CDD" id="cd11715">
    <property type="entry name" value="THUMP_AdoMetMT"/>
    <property type="match status" value="1"/>
</dbReference>
<dbReference type="FunFam" id="3.30.750.80:FF:000001">
    <property type="entry name" value="Ribosomal RNA large subunit methyltransferase K/L"/>
    <property type="match status" value="1"/>
</dbReference>
<dbReference type="FunFam" id="3.40.50.150:FF:000039">
    <property type="entry name" value="Ribosomal RNA large subunit methyltransferase K/L"/>
    <property type="match status" value="1"/>
</dbReference>
<dbReference type="Gene3D" id="3.30.2130.30">
    <property type="match status" value="1"/>
</dbReference>
<dbReference type="Gene3D" id="3.30.750.80">
    <property type="entry name" value="RNA methyltransferase domain (HRMD) like"/>
    <property type="match status" value="1"/>
</dbReference>
<dbReference type="Gene3D" id="3.40.50.150">
    <property type="entry name" value="Vaccinia Virus protein VP39"/>
    <property type="match status" value="2"/>
</dbReference>
<dbReference type="HAMAP" id="MF_01858">
    <property type="entry name" value="23SrRNA_methyltr_KL"/>
    <property type="match status" value="1"/>
</dbReference>
<dbReference type="InterPro" id="IPR017244">
    <property type="entry name" value="23SrRNA_methyltr_KL"/>
</dbReference>
<dbReference type="InterPro" id="IPR002052">
    <property type="entry name" value="DNA_methylase_N6_adenine_CS"/>
</dbReference>
<dbReference type="InterPro" id="IPR000241">
    <property type="entry name" value="RlmKL-like_Mtase"/>
</dbReference>
<dbReference type="InterPro" id="IPR053943">
    <property type="entry name" value="RlmKL-like_Mtase_CS"/>
</dbReference>
<dbReference type="InterPro" id="IPR054170">
    <property type="entry name" value="RlmL_1st"/>
</dbReference>
<dbReference type="InterPro" id="IPR019614">
    <property type="entry name" value="SAM-dep_methyl-trfase"/>
</dbReference>
<dbReference type="InterPro" id="IPR029063">
    <property type="entry name" value="SAM-dependent_MTases_sf"/>
</dbReference>
<dbReference type="InterPro" id="IPR004114">
    <property type="entry name" value="THUMP_dom"/>
</dbReference>
<dbReference type="NCBIfam" id="NF008748">
    <property type="entry name" value="PRK11783.1"/>
    <property type="match status" value="1"/>
</dbReference>
<dbReference type="PANTHER" id="PTHR47313">
    <property type="entry name" value="RIBOSOMAL RNA LARGE SUBUNIT METHYLTRANSFERASE K/L"/>
    <property type="match status" value="1"/>
</dbReference>
<dbReference type="PANTHER" id="PTHR47313:SF1">
    <property type="entry name" value="RIBOSOMAL RNA LARGE SUBUNIT METHYLTRANSFERASE K_L"/>
    <property type="match status" value="1"/>
</dbReference>
<dbReference type="Pfam" id="PF10672">
    <property type="entry name" value="Methyltrans_SAM"/>
    <property type="match status" value="1"/>
</dbReference>
<dbReference type="Pfam" id="PF22020">
    <property type="entry name" value="RlmL_1st"/>
    <property type="match status" value="1"/>
</dbReference>
<dbReference type="Pfam" id="PF02926">
    <property type="entry name" value="THUMP"/>
    <property type="match status" value="1"/>
</dbReference>
<dbReference type="Pfam" id="PF01170">
    <property type="entry name" value="UPF0020"/>
    <property type="match status" value="1"/>
</dbReference>
<dbReference type="PIRSF" id="PIRSF037618">
    <property type="entry name" value="RNA_Mtase_bacteria_prd"/>
    <property type="match status" value="1"/>
</dbReference>
<dbReference type="PRINTS" id="PR00507">
    <property type="entry name" value="N12N6MTFRASE"/>
</dbReference>
<dbReference type="SMART" id="SM00981">
    <property type="entry name" value="THUMP"/>
    <property type="match status" value="1"/>
</dbReference>
<dbReference type="SUPFAM" id="SSF53335">
    <property type="entry name" value="S-adenosyl-L-methionine-dependent methyltransferases"/>
    <property type="match status" value="2"/>
</dbReference>
<dbReference type="PROSITE" id="PS51165">
    <property type="entry name" value="THUMP"/>
    <property type="match status" value="1"/>
</dbReference>
<dbReference type="PROSITE" id="PS01261">
    <property type="entry name" value="UPF0020"/>
    <property type="match status" value="1"/>
</dbReference>